<feature type="chain" id="PRO_0000070732" description="Chaperone protein DnaJ">
    <location>
        <begin position="1"/>
        <end position="371"/>
    </location>
</feature>
<feature type="domain" description="J" evidence="1">
    <location>
        <begin position="6"/>
        <end position="71"/>
    </location>
</feature>
<feature type="repeat" description="CXXCXGXG motif">
    <location>
        <begin position="152"/>
        <end position="159"/>
    </location>
</feature>
<feature type="repeat" description="CXXCXGXG motif">
    <location>
        <begin position="169"/>
        <end position="176"/>
    </location>
</feature>
<feature type="repeat" description="CXXCXGXG motif">
    <location>
        <begin position="191"/>
        <end position="198"/>
    </location>
</feature>
<feature type="repeat" description="CXXCXGXG motif">
    <location>
        <begin position="205"/>
        <end position="212"/>
    </location>
</feature>
<feature type="zinc finger region" description="CR-type" evidence="1">
    <location>
        <begin position="139"/>
        <end position="217"/>
    </location>
</feature>
<feature type="region of interest" description="Disordered" evidence="2">
    <location>
        <begin position="104"/>
        <end position="123"/>
    </location>
</feature>
<feature type="binding site" evidence="1">
    <location>
        <position position="152"/>
    </location>
    <ligand>
        <name>Zn(2+)</name>
        <dbReference type="ChEBI" id="CHEBI:29105"/>
        <label>1</label>
    </ligand>
</feature>
<feature type="binding site" evidence="1">
    <location>
        <position position="155"/>
    </location>
    <ligand>
        <name>Zn(2+)</name>
        <dbReference type="ChEBI" id="CHEBI:29105"/>
        <label>1</label>
    </ligand>
</feature>
<feature type="binding site" evidence="1">
    <location>
        <position position="169"/>
    </location>
    <ligand>
        <name>Zn(2+)</name>
        <dbReference type="ChEBI" id="CHEBI:29105"/>
        <label>2</label>
    </ligand>
</feature>
<feature type="binding site" evidence="1">
    <location>
        <position position="172"/>
    </location>
    <ligand>
        <name>Zn(2+)</name>
        <dbReference type="ChEBI" id="CHEBI:29105"/>
        <label>2</label>
    </ligand>
</feature>
<feature type="binding site" evidence="1">
    <location>
        <position position="191"/>
    </location>
    <ligand>
        <name>Zn(2+)</name>
        <dbReference type="ChEBI" id="CHEBI:29105"/>
        <label>2</label>
    </ligand>
</feature>
<feature type="binding site" evidence="1">
    <location>
        <position position="194"/>
    </location>
    <ligand>
        <name>Zn(2+)</name>
        <dbReference type="ChEBI" id="CHEBI:29105"/>
        <label>2</label>
    </ligand>
</feature>
<feature type="binding site" evidence="1">
    <location>
        <position position="205"/>
    </location>
    <ligand>
        <name>Zn(2+)</name>
        <dbReference type="ChEBI" id="CHEBI:29105"/>
        <label>1</label>
    </ligand>
</feature>
<feature type="binding site" evidence="1">
    <location>
        <position position="208"/>
    </location>
    <ligand>
        <name>Zn(2+)</name>
        <dbReference type="ChEBI" id="CHEBI:29105"/>
        <label>1</label>
    </ligand>
</feature>
<protein>
    <recommendedName>
        <fullName evidence="1">Chaperone protein DnaJ</fullName>
    </recommendedName>
</protein>
<accession>Q6MNG0</accession>
<comment type="function">
    <text evidence="1">Participates actively in the response to hyperosmotic and heat shock by preventing the aggregation of stress-denatured proteins and by disaggregating proteins, also in an autonomous, DnaK-independent fashion. Unfolded proteins bind initially to DnaJ; upon interaction with the DnaJ-bound protein, DnaK hydrolyzes its bound ATP, resulting in the formation of a stable complex. GrpE releases ADP from DnaK; ATP binding to DnaK triggers the release of the substrate protein, thus completing the reaction cycle. Several rounds of ATP-dependent interactions between DnaJ, DnaK and GrpE are required for fully efficient folding. Also involved, together with DnaK and GrpE, in the DNA replication of plasmids through activation of initiation proteins.</text>
</comment>
<comment type="cofactor">
    <cofactor evidence="1">
        <name>Zn(2+)</name>
        <dbReference type="ChEBI" id="CHEBI:29105"/>
    </cofactor>
    <text evidence="1">Binds 2 Zn(2+) ions per monomer.</text>
</comment>
<comment type="subunit">
    <text evidence="1">Homodimer.</text>
</comment>
<comment type="subcellular location">
    <subcellularLocation>
        <location evidence="1">Cytoplasm</location>
    </subcellularLocation>
</comment>
<comment type="domain">
    <text evidence="1">The J domain is necessary and sufficient to stimulate DnaK ATPase activity. Zinc center 1 plays an important role in the autonomous, DnaK-independent chaperone activity of DnaJ. Zinc center 2 is essential for interaction with DnaK and for DnaJ activity.</text>
</comment>
<comment type="similarity">
    <text evidence="1">Belongs to the DnaJ family.</text>
</comment>
<proteinExistence type="inferred from homology"/>
<name>DNAJ_BDEBA</name>
<reference key="1">
    <citation type="journal article" date="2004" name="Science">
        <title>A predator unmasked: life cycle of Bdellovibrio bacteriovorus from a genomic perspective.</title>
        <authorList>
            <person name="Rendulic S."/>
            <person name="Jagtap P."/>
            <person name="Rosinus A."/>
            <person name="Eppinger M."/>
            <person name="Baar C."/>
            <person name="Lanz C."/>
            <person name="Keller H."/>
            <person name="Lambert C."/>
            <person name="Evans K.J."/>
            <person name="Goesmann A."/>
            <person name="Meyer F."/>
            <person name="Sockett R.E."/>
            <person name="Schuster S.C."/>
        </authorList>
    </citation>
    <scope>NUCLEOTIDE SEQUENCE [LARGE SCALE GENOMIC DNA]</scope>
    <source>
        <strain>ATCC 15356 / DSM 50701 / NCIMB 9529 / HD100</strain>
    </source>
</reference>
<evidence type="ECO:0000255" key="1">
    <source>
        <dbReference type="HAMAP-Rule" id="MF_01152"/>
    </source>
</evidence>
<evidence type="ECO:0000256" key="2">
    <source>
        <dbReference type="SAM" id="MobiDB-lite"/>
    </source>
</evidence>
<keyword id="KW-0143">Chaperone</keyword>
<keyword id="KW-0963">Cytoplasm</keyword>
<keyword id="KW-0235">DNA replication</keyword>
<keyword id="KW-0479">Metal-binding</keyword>
<keyword id="KW-1185">Reference proteome</keyword>
<keyword id="KW-0677">Repeat</keyword>
<keyword id="KW-0346">Stress response</keyword>
<keyword id="KW-0862">Zinc</keyword>
<keyword id="KW-0863">Zinc-finger</keyword>
<dbReference type="EMBL" id="BX842649">
    <property type="protein sequence ID" value="CAE79192.1"/>
    <property type="molecule type" value="Genomic_DNA"/>
</dbReference>
<dbReference type="RefSeq" id="WP_011163794.1">
    <property type="nucleotide sequence ID" value="NC_005363.1"/>
</dbReference>
<dbReference type="SMR" id="Q6MNG0"/>
<dbReference type="STRING" id="264462.Bd1296"/>
<dbReference type="GeneID" id="93012317"/>
<dbReference type="KEGG" id="bba:Bd1296"/>
<dbReference type="eggNOG" id="COG0484">
    <property type="taxonomic scope" value="Bacteria"/>
</dbReference>
<dbReference type="HOGENOM" id="CLU_017633_0_7_7"/>
<dbReference type="Proteomes" id="UP000008080">
    <property type="component" value="Chromosome"/>
</dbReference>
<dbReference type="GO" id="GO:0005737">
    <property type="term" value="C:cytoplasm"/>
    <property type="evidence" value="ECO:0007669"/>
    <property type="project" value="UniProtKB-SubCell"/>
</dbReference>
<dbReference type="GO" id="GO:0005524">
    <property type="term" value="F:ATP binding"/>
    <property type="evidence" value="ECO:0007669"/>
    <property type="project" value="InterPro"/>
</dbReference>
<dbReference type="GO" id="GO:0031072">
    <property type="term" value="F:heat shock protein binding"/>
    <property type="evidence" value="ECO:0007669"/>
    <property type="project" value="InterPro"/>
</dbReference>
<dbReference type="GO" id="GO:0051082">
    <property type="term" value="F:unfolded protein binding"/>
    <property type="evidence" value="ECO:0007669"/>
    <property type="project" value="UniProtKB-UniRule"/>
</dbReference>
<dbReference type="GO" id="GO:0008270">
    <property type="term" value="F:zinc ion binding"/>
    <property type="evidence" value="ECO:0007669"/>
    <property type="project" value="UniProtKB-UniRule"/>
</dbReference>
<dbReference type="GO" id="GO:0051085">
    <property type="term" value="P:chaperone cofactor-dependent protein refolding"/>
    <property type="evidence" value="ECO:0007669"/>
    <property type="project" value="TreeGrafter"/>
</dbReference>
<dbReference type="GO" id="GO:0006260">
    <property type="term" value="P:DNA replication"/>
    <property type="evidence" value="ECO:0007669"/>
    <property type="project" value="UniProtKB-KW"/>
</dbReference>
<dbReference type="GO" id="GO:0042026">
    <property type="term" value="P:protein refolding"/>
    <property type="evidence" value="ECO:0007669"/>
    <property type="project" value="TreeGrafter"/>
</dbReference>
<dbReference type="GO" id="GO:0009408">
    <property type="term" value="P:response to heat"/>
    <property type="evidence" value="ECO:0007669"/>
    <property type="project" value="InterPro"/>
</dbReference>
<dbReference type="CDD" id="cd06257">
    <property type="entry name" value="DnaJ"/>
    <property type="match status" value="1"/>
</dbReference>
<dbReference type="CDD" id="cd10747">
    <property type="entry name" value="DnaJ_C"/>
    <property type="match status" value="1"/>
</dbReference>
<dbReference type="CDD" id="cd10719">
    <property type="entry name" value="DnaJ_zf"/>
    <property type="match status" value="1"/>
</dbReference>
<dbReference type="FunFam" id="1.10.287.110:FF:000034">
    <property type="entry name" value="Chaperone protein DnaJ"/>
    <property type="match status" value="1"/>
</dbReference>
<dbReference type="FunFam" id="2.60.260.20:FF:000005">
    <property type="entry name" value="Chaperone protein dnaJ 1, mitochondrial"/>
    <property type="match status" value="1"/>
</dbReference>
<dbReference type="FunFam" id="2.10.230.10:FF:000002">
    <property type="entry name" value="Molecular chaperone DnaJ"/>
    <property type="match status" value="1"/>
</dbReference>
<dbReference type="Gene3D" id="1.10.287.110">
    <property type="entry name" value="DnaJ domain"/>
    <property type="match status" value="1"/>
</dbReference>
<dbReference type="Gene3D" id="2.10.230.10">
    <property type="entry name" value="Heat shock protein DnaJ, cysteine-rich domain"/>
    <property type="match status" value="1"/>
</dbReference>
<dbReference type="Gene3D" id="2.60.260.20">
    <property type="entry name" value="Urease metallochaperone UreE, N-terminal domain"/>
    <property type="match status" value="2"/>
</dbReference>
<dbReference type="HAMAP" id="MF_01152">
    <property type="entry name" value="DnaJ"/>
    <property type="match status" value="1"/>
</dbReference>
<dbReference type="InterPro" id="IPR012724">
    <property type="entry name" value="DnaJ"/>
</dbReference>
<dbReference type="InterPro" id="IPR002939">
    <property type="entry name" value="DnaJ_C"/>
</dbReference>
<dbReference type="InterPro" id="IPR001623">
    <property type="entry name" value="DnaJ_domain"/>
</dbReference>
<dbReference type="InterPro" id="IPR018253">
    <property type="entry name" value="DnaJ_domain_CS"/>
</dbReference>
<dbReference type="InterPro" id="IPR008971">
    <property type="entry name" value="HSP40/DnaJ_pept-bd"/>
</dbReference>
<dbReference type="InterPro" id="IPR001305">
    <property type="entry name" value="HSP_DnaJ_Cys-rich_dom"/>
</dbReference>
<dbReference type="InterPro" id="IPR036410">
    <property type="entry name" value="HSP_DnaJ_Cys-rich_dom_sf"/>
</dbReference>
<dbReference type="InterPro" id="IPR036869">
    <property type="entry name" value="J_dom_sf"/>
</dbReference>
<dbReference type="NCBIfam" id="TIGR02349">
    <property type="entry name" value="DnaJ_bact"/>
    <property type="match status" value="1"/>
</dbReference>
<dbReference type="NCBIfam" id="NF008035">
    <property type="entry name" value="PRK10767.1"/>
    <property type="match status" value="1"/>
</dbReference>
<dbReference type="PANTHER" id="PTHR43096:SF48">
    <property type="entry name" value="CHAPERONE PROTEIN DNAJ"/>
    <property type="match status" value="1"/>
</dbReference>
<dbReference type="PANTHER" id="PTHR43096">
    <property type="entry name" value="DNAJ HOMOLOG 1, MITOCHONDRIAL-RELATED"/>
    <property type="match status" value="1"/>
</dbReference>
<dbReference type="Pfam" id="PF00226">
    <property type="entry name" value="DnaJ"/>
    <property type="match status" value="1"/>
</dbReference>
<dbReference type="Pfam" id="PF01556">
    <property type="entry name" value="DnaJ_C"/>
    <property type="match status" value="1"/>
</dbReference>
<dbReference type="Pfam" id="PF00684">
    <property type="entry name" value="DnaJ_CXXCXGXG"/>
    <property type="match status" value="1"/>
</dbReference>
<dbReference type="PRINTS" id="PR00625">
    <property type="entry name" value="JDOMAIN"/>
</dbReference>
<dbReference type="SMART" id="SM00271">
    <property type="entry name" value="DnaJ"/>
    <property type="match status" value="1"/>
</dbReference>
<dbReference type="SUPFAM" id="SSF46565">
    <property type="entry name" value="Chaperone J-domain"/>
    <property type="match status" value="1"/>
</dbReference>
<dbReference type="SUPFAM" id="SSF57938">
    <property type="entry name" value="DnaJ/Hsp40 cysteine-rich domain"/>
    <property type="match status" value="1"/>
</dbReference>
<dbReference type="SUPFAM" id="SSF49493">
    <property type="entry name" value="HSP40/DnaJ peptide-binding domain"/>
    <property type="match status" value="2"/>
</dbReference>
<dbReference type="PROSITE" id="PS00636">
    <property type="entry name" value="DNAJ_1"/>
    <property type="match status" value="1"/>
</dbReference>
<dbReference type="PROSITE" id="PS50076">
    <property type="entry name" value="DNAJ_2"/>
    <property type="match status" value="1"/>
</dbReference>
<dbReference type="PROSITE" id="PS51188">
    <property type="entry name" value="ZF_CR"/>
    <property type="match status" value="1"/>
</dbReference>
<organism>
    <name type="scientific">Bdellovibrio bacteriovorus (strain ATCC 15356 / DSM 50701 / NCIMB 9529 / HD100)</name>
    <dbReference type="NCBI Taxonomy" id="264462"/>
    <lineage>
        <taxon>Bacteria</taxon>
        <taxon>Pseudomonadati</taxon>
        <taxon>Bdellovibrionota</taxon>
        <taxon>Bdellovibrionia</taxon>
        <taxon>Bdellovibrionales</taxon>
        <taxon>Pseudobdellovibrionaceae</taxon>
        <taxon>Bdellovibrio</taxon>
    </lineage>
</organism>
<gene>
    <name evidence="1" type="primary">dnaJ</name>
    <name type="ordered locus">Bd1296</name>
</gene>
<sequence length="371" mass="40776">MAGKRDYYEILGVEKGADQDTIKKAYRKLAMQFHPDKNPGNKEAEEKFKEAAGAYEVLSDAQKRAQYDRFGHDAFTRGGGGGGFTDAEDIFSHFGDIFGDFFGGGMGGQQRQRRNRNEPRRGSDLRYVTEITLKDVITGIEKEIEFDTDKNCDECKGTGAEKGSQVSTCGTCGGSGQVVRQQGFFAMASTCPTCHGQGTVIKNPCKPCKGKGRVAEHRKIRLNIPAGVDTGTRLRVATEGEGGYMGGPPGDLYVEIRVKQHNNFERRNEDLFAELSLPYVQMLLGAEIEVPTVTGKAKLEVPKGTHHGDNVKLVGEGLPSLRGNRRGDIYFTVNVQFPEKLHKDEEKLLREIAKARGLNVTSEGGFFGKKK</sequence>